<feature type="chain" id="PRO_0000305333" description="Probable transporter XF_0766">
    <location>
        <begin position="1"/>
        <end position="135"/>
    </location>
</feature>
<feature type="transmembrane region" description="Helical" evidence="1">
    <location>
        <begin position="4"/>
        <end position="24"/>
    </location>
</feature>
<feature type="transmembrane region" description="Helical" evidence="1">
    <location>
        <begin position="45"/>
        <end position="65"/>
    </location>
</feature>
<feature type="transmembrane region" description="Helical" evidence="1">
    <location>
        <begin position="71"/>
        <end position="91"/>
    </location>
</feature>
<feature type="transmembrane region" description="Helical" evidence="1">
    <location>
        <begin position="114"/>
        <end position="134"/>
    </location>
</feature>
<sequence>MSEYWYPILGGILLGLSTVMLLLLNGRIAGISGIVGRLLQGGNPAQDIPFVVGLVLGPLVFSVIFDRFPSVTVAATWPTIIVAGLLVGLGTRMSAGCTSGHGIAGIARHSPRSIVATAIFLISGMATATFMGVYQ</sequence>
<organism>
    <name type="scientific">Xylella fastidiosa (strain 9a5c)</name>
    <dbReference type="NCBI Taxonomy" id="160492"/>
    <lineage>
        <taxon>Bacteria</taxon>
        <taxon>Pseudomonadati</taxon>
        <taxon>Pseudomonadota</taxon>
        <taxon>Gammaproteobacteria</taxon>
        <taxon>Lysobacterales</taxon>
        <taxon>Lysobacteraceae</taxon>
        <taxon>Xylella</taxon>
    </lineage>
</organism>
<evidence type="ECO:0000255" key="1"/>
<evidence type="ECO:0000269" key="2">
    <source>
    </source>
</evidence>
<evidence type="ECO:0000305" key="3"/>
<name>Y766_XYLFA</name>
<protein>
    <recommendedName>
        <fullName evidence="3">Probable transporter XF_0766</fullName>
    </recommendedName>
</protein>
<comment type="subcellular location">
    <subcellularLocation>
        <location evidence="3">Cell inner membrane</location>
        <topology evidence="1">Multi-pass membrane protein</topology>
    </subcellularLocation>
</comment>
<comment type="induction">
    <text evidence="2">Repressed by BigR.</text>
</comment>
<comment type="miscellaneous">
    <text>Part of an operon that comprises bigR, blh, XF_0764 and XF_0765.</text>
</comment>
<comment type="similarity">
    <text evidence="3">Belongs to the TsuA/YedE (TC 9.B.102) family.</text>
</comment>
<accession>Q9PFB2</accession>
<proteinExistence type="evidence at transcript level"/>
<reference key="1">
    <citation type="journal article" date="2000" name="Nature">
        <title>The genome sequence of the plant pathogen Xylella fastidiosa.</title>
        <authorList>
            <person name="Simpson A.J.G."/>
            <person name="Reinach F.C."/>
            <person name="Arruda P."/>
            <person name="Abreu F.A."/>
            <person name="Acencio M."/>
            <person name="Alvarenga R."/>
            <person name="Alves L.M.C."/>
            <person name="Araya J.E."/>
            <person name="Baia G.S."/>
            <person name="Baptista C.S."/>
            <person name="Barros M.H."/>
            <person name="Bonaccorsi E.D."/>
            <person name="Bordin S."/>
            <person name="Bove J.M."/>
            <person name="Briones M.R.S."/>
            <person name="Bueno M.R.P."/>
            <person name="Camargo A.A."/>
            <person name="Camargo L.E.A."/>
            <person name="Carraro D.M."/>
            <person name="Carrer H."/>
            <person name="Colauto N.B."/>
            <person name="Colombo C."/>
            <person name="Costa F.F."/>
            <person name="Costa M.C.R."/>
            <person name="Costa-Neto C.M."/>
            <person name="Coutinho L.L."/>
            <person name="Cristofani M."/>
            <person name="Dias-Neto E."/>
            <person name="Docena C."/>
            <person name="El-Dorry H."/>
            <person name="Facincani A.P."/>
            <person name="Ferreira A.J.S."/>
            <person name="Ferreira V.C.A."/>
            <person name="Ferro J.A."/>
            <person name="Fraga J.S."/>
            <person name="Franca S.C."/>
            <person name="Franco M.C."/>
            <person name="Frohme M."/>
            <person name="Furlan L.R."/>
            <person name="Garnier M."/>
            <person name="Goldman G.H."/>
            <person name="Goldman M.H.S."/>
            <person name="Gomes S.L."/>
            <person name="Gruber A."/>
            <person name="Ho P.L."/>
            <person name="Hoheisel J.D."/>
            <person name="Junqueira M.L."/>
            <person name="Kemper E.L."/>
            <person name="Kitajima J.P."/>
            <person name="Krieger J.E."/>
            <person name="Kuramae E.E."/>
            <person name="Laigret F."/>
            <person name="Lambais M.R."/>
            <person name="Leite L.C.C."/>
            <person name="Lemos E.G.M."/>
            <person name="Lemos M.V.F."/>
            <person name="Lopes S.A."/>
            <person name="Lopes C.R."/>
            <person name="Machado J.A."/>
            <person name="Machado M.A."/>
            <person name="Madeira A.M.B.N."/>
            <person name="Madeira H.M.F."/>
            <person name="Marino C.L."/>
            <person name="Marques M.V."/>
            <person name="Martins E.A.L."/>
            <person name="Martins E.M.F."/>
            <person name="Matsukuma A.Y."/>
            <person name="Menck C.F.M."/>
            <person name="Miracca E.C."/>
            <person name="Miyaki C.Y."/>
            <person name="Monteiro-Vitorello C.B."/>
            <person name="Moon D.H."/>
            <person name="Nagai M.A."/>
            <person name="Nascimento A.L.T.O."/>
            <person name="Netto L.E.S."/>
            <person name="Nhani A. Jr."/>
            <person name="Nobrega F.G."/>
            <person name="Nunes L.R."/>
            <person name="Oliveira M.A."/>
            <person name="de Oliveira M.C."/>
            <person name="de Oliveira R.C."/>
            <person name="Palmieri D.A."/>
            <person name="Paris A."/>
            <person name="Peixoto B.R."/>
            <person name="Pereira G.A.G."/>
            <person name="Pereira H.A. Jr."/>
            <person name="Pesquero J.B."/>
            <person name="Quaggio R.B."/>
            <person name="Roberto P.G."/>
            <person name="Rodrigues V."/>
            <person name="de Rosa A.J.M."/>
            <person name="de Rosa V.E. Jr."/>
            <person name="de Sa R.G."/>
            <person name="Santelli R.V."/>
            <person name="Sawasaki H.E."/>
            <person name="da Silva A.C.R."/>
            <person name="da Silva A.M."/>
            <person name="da Silva F.R."/>
            <person name="Silva W.A. Jr."/>
            <person name="da Silveira J.F."/>
            <person name="Silvestri M.L.Z."/>
            <person name="Siqueira W.J."/>
            <person name="de Souza A.A."/>
            <person name="de Souza A.P."/>
            <person name="Terenzi M.F."/>
            <person name="Truffi D."/>
            <person name="Tsai S.M."/>
            <person name="Tsuhako M.H."/>
            <person name="Vallada H."/>
            <person name="Van Sluys M.A."/>
            <person name="Verjovski-Almeida S."/>
            <person name="Vettore A.L."/>
            <person name="Zago M.A."/>
            <person name="Zatz M."/>
            <person name="Meidanis J."/>
            <person name="Setubal J.C."/>
        </authorList>
    </citation>
    <scope>NUCLEOTIDE SEQUENCE [LARGE SCALE GENOMIC DNA]</scope>
    <source>
        <strain>9a5c</strain>
    </source>
</reference>
<reference key="2">
    <citation type="journal article" date="2007" name="J. Bacteriol.">
        <title>BigR, a transcriptional repressor from plant-associated bacteria, regulates an operon implicated in biofilm growth.</title>
        <authorList>
            <person name="Barbosa R.L."/>
            <person name="Benedetti C.E."/>
        </authorList>
    </citation>
    <scope>REPRESSION BY BIGR</scope>
    <source>
        <strain>9a5c</strain>
    </source>
</reference>
<dbReference type="EMBL" id="AE003849">
    <property type="protein sequence ID" value="AAF83576.1"/>
    <property type="molecule type" value="Genomic_DNA"/>
</dbReference>
<dbReference type="PIR" id="C82766">
    <property type="entry name" value="C82766"/>
</dbReference>
<dbReference type="RefSeq" id="WP_010893289.1">
    <property type="nucleotide sequence ID" value="NC_002488.3"/>
</dbReference>
<dbReference type="SMR" id="Q9PFB2"/>
<dbReference type="STRING" id="160492.XF_0766"/>
<dbReference type="KEGG" id="xfa:XF_0766"/>
<dbReference type="eggNOG" id="COG2391">
    <property type="taxonomic scope" value="Bacteria"/>
</dbReference>
<dbReference type="HOGENOM" id="CLU_122700_1_0_6"/>
<dbReference type="Proteomes" id="UP000000812">
    <property type="component" value="Chromosome"/>
</dbReference>
<dbReference type="GO" id="GO:0005886">
    <property type="term" value="C:plasma membrane"/>
    <property type="evidence" value="ECO:0007669"/>
    <property type="project" value="UniProtKB-SubCell"/>
</dbReference>
<dbReference type="InterPro" id="IPR007272">
    <property type="entry name" value="Sulf_transp_TsuA/YedE"/>
</dbReference>
<dbReference type="PANTHER" id="PTHR30574">
    <property type="entry name" value="INNER MEMBRANE PROTEIN YEDE"/>
    <property type="match status" value="1"/>
</dbReference>
<dbReference type="PANTHER" id="PTHR30574:SF1">
    <property type="entry name" value="SULPHUR TRANSPORT DOMAIN-CONTAINING PROTEIN"/>
    <property type="match status" value="1"/>
</dbReference>
<dbReference type="Pfam" id="PF04143">
    <property type="entry name" value="Sulf_transp"/>
    <property type="match status" value="1"/>
</dbReference>
<keyword id="KW-0997">Cell inner membrane</keyword>
<keyword id="KW-1003">Cell membrane</keyword>
<keyword id="KW-0472">Membrane</keyword>
<keyword id="KW-0812">Transmembrane</keyword>
<keyword id="KW-1133">Transmembrane helix</keyword>
<keyword id="KW-0813">Transport</keyword>
<gene>
    <name type="ordered locus">XF_0766</name>
</gene>